<organism>
    <name type="scientific">Vibrio vulnificus (strain CMCP6)</name>
    <dbReference type="NCBI Taxonomy" id="216895"/>
    <lineage>
        <taxon>Bacteria</taxon>
        <taxon>Pseudomonadati</taxon>
        <taxon>Pseudomonadota</taxon>
        <taxon>Gammaproteobacteria</taxon>
        <taxon>Vibrionales</taxon>
        <taxon>Vibrionaceae</taxon>
        <taxon>Vibrio</taxon>
    </lineage>
</organism>
<accession>Q8DFQ1</accession>
<feature type="chain" id="PRO_0000102874" description="Succinate--CoA ligase [ADP-forming] subunit beta">
    <location>
        <begin position="1"/>
        <end position="388"/>
    </location>
</feature>
<feature type="domain" description="ATP-grasp" evidence="1">
    <location>
        <begin position="9"/>
        <end position="244"/>
    </location>
</feature>
<feature type="binding site" evidence="1">
    <location>
        <position position="46"/>
    </location>
    <ligand>
        <name>ATP</name>
        <dbReference type="ChEBI" id="CHEBI:30616"/>
    </ligand>
</feature>
<feature type="binding site" evidence="1">
    <location>
        <begin position="53"/>
        <end position="55"/>
    </location>
    <ligand>
        <name>ATP</name>
        <dbReference type="ChEBI" id="CHEBI:30616"/>
    </ligand>
</feature>
<feature type="binding site" evidence="1">
    <location>
        <position position="99"/>
    </location>
    <ligand>
        <name>ATP</name>
        <dbReference type="ChEBI" id="CHEBI:30616"/>
    </ligand>
</feature>
<feature type="binding site" evidence="1">
    <location>
        <position position="102"/>
    </location>
    <ligand>
        <name>ATP</name>
        <dbReference type="ChEBI" id="CHEBI:30616"/>
    </ligand>
</feature>
<feature type="binding site" evidence="1">
    <location>
        <position position="107"/>
    </location>
    <ligand>
        <name>ATP</name>
        <dbReference type="ChEBI" id="CHEBI:30616"/>
    </ligand>
</feature>
<feature type="binding site" evidence="1">
    <location>
        <position position="199"/>
    </location>
    <ligand>
        <name>Mg(2+)</name>
        <dbReference type="ChEBI" id="CHEBI:18420"/>
    </ligand>
</feature>
<feature type="binding site" evidence="1">
    <location>
        <position position="213"/>
    </location>
    <ligand>
        <name>Mg(2+)</name>
        <dbReference type="ChEBI" id="CHEBI:18420"/>
    </ligand>
</feature>
<feature type="binding site" evidence="1">
    <location>
        <position position="264"/>
    </location>
    <ligand>
        <name>substrate</name>
        <note>ligand shared with subunit alpha</note>
    </ligand>
</feature>
<feature type="binding site" evidence="1">
    <location>
        <begin position="321"/>
        <end position="323"/>
    </location>
    <ligand>
        <name>substrate</name>
        <note>ligand shared with subunit alpha</note>
    </ligand>
</feature>
<dbReference type="EC" id="6.2.1.5" evidence="1"/>
<dbReference type="EMBL" id="AE016795">
    <property type="protein sequence ID" value="AAO08693.1"/>
    <property type="molecule type" value="Genomic_DNA"/>
</dbReference>
<dbReference type="RefSeq" id="WP_011078272.1">
    <property type="nucleotide sequence ID" value="NC_004459.3"/>
</dbReference>
<dbReference type="SMR" id="Q8DFQ1"/>
<dbReference type="KEGG" id="vvu:VV1_0155"/>
<dbReference type="HOGENOM" id="CLU_037430_0_2_6"/>
<dbReference type="UniPathway" id="UPA00223">
    <property type="reaction ID" value="UER00999"/>
</dbReference>
<dbReference type="Proteomes" id="UP000002275">
    <property type="component" value="Chromosome 1"/>
</dbReference>
<dbReference type="GO" id="GO:0005829">
    <property type="term" value="C:cytosol"/>
    <property type="evidence" value="ECO:0007669"/>
    <property type="project" value="TreeGrafter"/>
</dbReference>
<dbReference type="GO" id="GO:0042709">
    <property type="term" value="C:succinate-CoA ligase complex"/>
    <property type="evidence" value="ECO:0007669"/>
    <property type="project" value="TreeGrafter"/>
</dbReference>
<dbReference type="GO" id="GO:0005524">
    <property type="term" value="F:ATP binding"/>
    <property type="evidence" value="ECO:0007669"/>
    <property type="project" value="UniProtKB-UniRule"/>
</dbReference>
<dbReference type="GO" id="GO:0000287">
    <property type="term" value="F:magnesium ion binding"/>
    <property type="evidence" value="ECO:0007669"/>
    <property type="project" value="UniProtKB-UniRule"/>
</dbReference>
<dbReference type="GO" id="GO:0004775">
    <property type="term" value="F:succinate-CoA ligase (ADP-forming) activity"/>
    <property type="evidence" value="ECO:0007669"/>
    <property type="project" value="UniProtKB-UniRule"/>
</dbReference>
<dbReference type="GO" id="GO:0004776">
    <property type="term" value="F:succinate-CoA ligase (GDP-forming) activity"/>
    <property type="evidence" value="ECO:0007669"/>
    <property type="project" value="RHEA"/>
</dbReference>
<dbReference type="GO" id="GO:0006104">
    <property type="term" value="P:succinyl-CoA metabolic process"/>
    <property type="evidence" value="ECO:0007669"/>
    <property type="project" value="TreeGrafter"/>
</dbReference>
<dbReference type="GO" id="GO:0006099">
    <property type="term" value="P:tricarboxylic acid cycle"/>
    <property type="evidence" value="ECO:0007669"/>
    <property type="project" value="UniProtKB-UniRule"/>
</dbReference>
<dbReference type="FunFam" id="3.30.1490.20:FF:000002">
    <property type="entry name" value="Succinate--CoA ligase [ADP-forming] subunit beta"/>
    <property type="match status" value="1"/>
</dbReference>
<dbReference type="FunFam" id="3.30.470.20:FF:000002">
    <property type="entry name" value="Succinate--CoA ligase [ADP-forming] subunit beta"/>
    <property type="match status" value="1"/>
</dbReference>
<dbReference type="FunFam" id="3.40.50.261:FF:000001">
    <property type="entry name" value="Succinate--CoA ligase [ADP-forming] subunit beta"/>
    <property type="match status" value="1"/>
</dbReference>
<dbReference type="Gene3D" id="3.30.1490.20">
    <property type="entry name" value="ATP-grasp fold, A domain"/>
    <property type="match status" value="1"/>
</dbReference>
<dbReference type="Gene3D" id="3.30.470.20">
    <property type="entry name" value="ATP-grasp fold, B domain"/>
    <property type="match status" value="1"/>
</dbReference>
<dbReference type="Gene3D" id="3.40.50.261">
    <property type="entry name" value="Succinyl-CoA synthetase domains"/>
    <property type="match status" value="1"/>
</dbReference>
<dbReference type="HAMAP" id="MF_00558">
    <property type="entry name" value="Succ_CoA_beta"/>
    <property type="match status" value="1"/>
</dbReference>
<dbReference type="InterPro" id="IPR011761">
    <property type="entry name" value="ATP-grasp"/>
</dbReference>
<dbReference type="InterPro" id="IPR013650">
    <property type="entry name" value="ATP-grasp_succ-CoA_synth-type"/>
</dbReference>
<dbReference type="InterPro" id="IPR013815">
    <property type="entry name" value="ATP_grasp_subdomain_1"/>
</dbReference>
<dbReference type="InterPro" id="IPR017866">
    <property type="entry name" value="Succ-CoA_synthase_bsu_CS"/>
</dbReference>
<dbReference type="InterPro" id="IPR005811">
    <property type="entry name" value="SUCC_ACL_C"/>
</dbReference>
<dbReference type="InterPro" id="IPR005809">
    <property type="entry name" value="Succ_CoA_ligase-like_bsu"/>
</dbReference>
<dbReference type="InterPro" id="IPR016102">
    <property type="entry name" value="Succinyl-CoA_synth-like"/>
</dbReference>
<dbReference type="NCBIfam" id="NF001913">
    <property type="entry name" value="PRK00696.1"/>
    <property type="match status" value="1"/>
</dbReference>
<dbReference type="NCBIfam" id="TIGR01016">
    <property type="entry name" value="sucCoAbeta"/>
    <property type="match status" value="1"/>
</dbReference>
<dbReference type="PANTHER" id="PTHR11815:SF10">
    <property type="entry name" value="SUCCINATE--COA LIGASE [GDP-FORMING] SUBUNIT BETA, MITOCHONDRIAL"/>
    <property type="match status" value="1"/>
</dbReference>
<dbReference type="PANTHER" id="PTHR11815">
    <property type="entry name" value="SUCCINYL-COA SYNTHETASE BETA CHAIN"/>
    <property type="match status" value="1"/>
</dbReference>
<dbReference type="Pfam" id="PF08442">
    <property type="entry name" value="ATP-grasp_2"/>
    <property type="match status" value="1"/>
</dbReference>
<dbReference type="Pfam" id="PF00549">
    <property type="entry name" value="Ligase_CoA"/>
    <property type="match status" value="1"/>
</dbReference>
<dbReference type="PIRSF" id="PIRSF001554">
    <property type="entry name" value="SucCS_beta"/>
    <property type="match status" value="1"/>
</dbReference>
<dbReference type="SUPFAM" id="SSF56059">
    <property type="entry name" value="Glutathione synthetase ATP-binding domain-like"/>
    <property type="match status" value="1"/>
</dbReference>
<dbReference type="SUPFAM" id="SSF52210">
    <property type="entry name" value="Succinyl-CoA synthetase domains"/>
    <property type="match status" value="1"/>
</dbReference>
<dbReference type="PROSITE" id="PS50975">
    <property type="entry name" value="ATP_GRASP"/>
    <property type="match status" value="1"/>
</dbReference>
<dbReference type="PROSITE" id="PS01217">
    <property type="entry name" value="SUCCINYL_COA_LIG_3"/>
    <property type="match status" value="1"/>
</dbReference>
<sequence>MNLHEYQAKQLFAEFGLPVPEGYACDTPQEAFEAAGRISTAKKVVKCQVHAGGRGKAGGVELHDTKEGVKEFAQKWLGKNLVTYQTDANGQPVTKILVEEASNIANELYLGAVVDRATRKVVFMASTEGGVEIEKVAEETPELIHKAAIDPLVGPQAYQGRELAFKLGLQGDQIKQFVKIFMGLGEMFTQYDLALLEINPLVITGEGNLLCLDGKINIDSNALYRQPKLREMHDPSQEDKREAHAAQWELNYVALDGNVGCMVNGAGLAMGTMDIVNLHGGKPANFLDVGGGATKERVAEAFKIILSDDNVKAVLVNIFGGIVRCDMIAEGIIGAVKEVGVSVPVVVRLEGTNADLGRKVLAESGLDIIAAESLTDAAQKVVAAAEGK</sequence>
<keyword id="KW-0067">ATP-binding</keyword>
<keyword id="KW-0436">Ligase</keyword>
<keyword id="KW-0460">Magnesium</keyword>
<keyword id="KW-0479">Metal-binding</keyword>
<keyword id="KW-0547">Nucleotide-binding</keyword>
<keyword id="KW-0816">Tricarboxylic acid cycle</keyword>
<name>SUCC_VIBVU</name>
<proteinExistence type="inferred from homology"/>
<evidence type="ECO:0000255" key="1">
    <source>
        <dbReference type="HAMAP-Rule" id="MF_00558"/>
    </source>
</evidence>
<protein>
    <recommendedName>
        <fullName evidence="1">Succinate--CoA ligase [ADP-forming] subunit beta</fullName>
        <ecNumber evidence="1">6.2.1.5</ecNumber>
    </recommendedName>
    <alternativeName>
        <fullName evidence="1">Succinyl-CoA synthetase subunit beta</fullName>
        <shortName evidence="1">SCS-beta</shortName>
    </alternativeName>
</protein>
<comment type="function">
    <text evidence="1">Succinyl-CoA synthetase functions in the citric acid cycle (TCA), coupling the hydrolysis of succinyl-CoA to the synthesis of either ATP or GTP and thus represents the only step of substrate-level phosphorylation in the TCA. The beta subunit provides nucleotide specificity of the enzyme and binds the substrate succinate, while the binding sites for coenzyme A and phosphate are found in the alpha subunit.</text>
</comment>
<comment type="catalytic activity">
    <reaction evidence="1">
        <text>succinate + ATP + CoA = succinyl-CoA + ADP + phosphate</text>
        <dbReference type="Rhea" id="RHEA:17661"/>
        <dbReference type="ChEBI" id="CHEBI:30031"/>
        <dbReference type="ChEBI" id="CHEBI:30616"/>
        <dbReference type="ChEBI" id="CHEBI:43474"/>
        <dbReference type="ChEBI" id="CHEBI:57287"/>
        <dbReference type="ChEBI" id="CHEBI:57292"/>
        <dbReference type="ChEBI" id="CHEBI:456216"/>
        <dbReference type="EC" id="6.2.1.5"/>
    </reaction>
    <physiologicalReaction direction="right-to-left" evidence="1">
        <dbReference type="Rhea" id="RHEA:17663"/>
    </physiologicalReaction>
</comment>
<comment type="catalytic activity">
    <reaction evidence="1">
        <text>GTP + succinate + CoA = succinyl-CoA + GDP + phosphate</text>
        <dbReference type="Rhea" id="RHEA:22120"/>
        <dbReference type="ChEBI" id="CHEBI:30031"/>
        <dbReference type="ChEBI" id="CHEBI:37565"/>
        <dbReference type="ChEBI" id="CHEBI:43474"/>
        <dbReference type="ChEBI" id="CHEBI:57287"/>
        <dbReference type="ChEBI" id="CHEBI:57292"/>
        <dbReference type="ChEBI" id="CHEBI:58189"/>
    </reaction>
    <physiologicalReaction direction="right-to-left" evidence="1">
        <dbReference type="Rhea" id="RHEA:22122"/>
    </physiologicalReaction>
</comment>
<comment type="cofactor">
    <cofactor evidence="1">
        <name>Mg(2+)</name>
        <dbReference type="ChEBI" id="CHEBI:18420"/>
    </cofactor>
    <text evidence="1">Binds 1 Mg(2+) ion per subunit.</text>
</comment>
<comment type="pathway">
    <text evidence="1">Carbohydrate metabolism; tricarboxylic acid cycle; succinate from succinyl-CoA (ligase route): step 1/1.</text>
</comment>
<comment type="subunit">
    <text evidence="1">Heterotetramer of two alpha and two beta subunits.</text>
</comment>
<comment type="similarity">
    <text evidence="1">Belongs to the succinate/malate CoA ligase beta subunit family.</text>
</comment>
<gene>
    <name evidence="1" type="primary">sucC</name>
    <name type="ordered locus">VV1_0155</name>
</gene>
<reference key="1">
    <citation type="submission" date="2002-12" db="EMBL/GenBank/DDBJ databases">
        <title>Complete genome sequence of Vibrio vulnificus CMCP6.</title>
        <authorList>
            <person name="Rhee J.H."/>
            <person name="Kim S.Y."/>
            <person name="Chung S.S."/>
            <person name="Kim J.J."/>
            <person name="Moon Y.H."/>
            <person name="Jeong H."/>
            <person name="Choy H.E."/>
        </authorList>
    </citation>
    <scope>NUCLEOTIDE SEQUENCE [LARGE SCALE GENOMIC DNA]</scope>
    <source>
        <strain>CMCP6</strain>
    </source>
</reference>